<feature type="chain" id="PRO_1000214438" description="Large ribosomal subunit protein uL2">
    <location>
        <begin position="1"/>
        <end position="278"/>
    </location>
</feature>
<feature type="region of interest" description="Disordered" evidence="2">
    <location>
        <begin position="1"/>
        <end position="58"/>
    </location>
</feature>
<feature type="region of interest" description="Disordered" evidence="2">
    <location>
        <begin position="210"/>
        <end position="278"/>
    </location>
</feature>
<feature type="compositionally biased region" description="Basic and acidic residues" evidence="2">
    <location>
        <begin position="23"/>
        <end position="33"/>
    </location>
</feature>
<feature type="compositionally biased region" description="Low complexity" evidence="2">
    <location>
        <begin position="40"/>
        <end position="49"/>
    </location>
</feature>
<feature type="compositionally biased region" description="Basic residues" evidence="2">
    <location>
        <begin position="210"/>
        <end position="220"/>
    </location>
</feature>
<feature type="compositionally biased region" description="Basic residues" evidence="2">
    <location>
        <begin position="269"/>
        <end position="278"/>
    </location>
</feature>
<comment type="function">
    <text evidence="1">One of the primary rRNA binding proteins. Required for association of the 30S and 50S subunits to form the 70S ribosome, for tRNA binding and peptide bond formation. It has been suggested to have peptidyltransferase activity; this is somewhat controversial. Makes several contacts with the 16S rRNA in the 70S ribosome.</text>
</comment>
<comment type="subunit">
    <text evidence="1">Part of the 50S ribosomal subunit. Forms a bridge to the 30S subunit in the 70S ribosome.</text>
</comment>
<comment type="similarity">
    <text evidence="1">Belongs to the universal ribosomal protein uL2 family.</text>
</comment>
<name>RL2_BEUC1</name>
<accession>C5C0I8</accession>
<dbReference type="EMBL" id="CP001618">
    <property type="protein sequence ID" value="ACQ81384.1"/>
    <property type="molecule type" value="Genomic_DNA"/>
</dbReference>
<dbReference type="RefSeq" id="WP_015883624.1">
    <property type="nucleotide sequence ID" value="NC_012669.1"/>
</dbReference>
<dbReference type="SMR" id="C5C0I8"/>
<dbReference type="STRING" id="471853.Bcav_3140"/>
<dbReference type="KEGG" id="bcv:Bcav_3140"/>
<dbReference type="eggNOG" id="COG0090">
    <property type="taxonomic scope" value="Bacteria"/>
</dbReference>
<dbReference type="HOGENOM" id="CLU_036235_2_1_11"/>
<dbReference type="OrthoDB" id="9778722at2"/>
<dbReference type="Proteomes" id="UP000007962">
    <property type="component" value="Chromosome"/>
</dbReference>
<dbReference type="GO" id="GO:0015934">
    <property type="term" value="C:large ribosomal subunit"/>
    <property type="evidence" value="ECO:0007669"/>
    <property type="project" value="InterPro"/>
</dbReference>
<dbReference type="GO" id="GO:0019843">
    <property type="term" value="F:rRNA binding"/>
    <property type="evidence" value="ECO:0007669"/>
    <property type="project" value="UniProtKB-UniRule"/>
</dbReference>
<dbReference type="GO" id="GO:0003735">
    <property type="term" value="F:structural constituent of ribosome"/>
    <property type="evidence" value="ECO:0007669"/>
    <property type="project" value="InterPro"/>
</dbReference>
<dbReference type="GO" id="GO:0016740">
    <property type="term" value="F:transferase activity"/>
    <property type="evidence" value="ECO:0007669"/>
    <property type="project" value="InterPro"/>
</dbReference>
<dbReference type="GO" id="GO:0002181">
    <property type="term" value="P:cytoplasmic translation"/>
    <property type="evidence" value="ECO:0007669"/>
    <property type="project" value="TreeGrafter"/>
</dbReference>
<dbReference type="FunFam" id="2.30.30.30:FF:000001">
    <property type="entry name" value="50S ribosomal protein L2"/>
    <property type="match status" value="1"/>
</dbReference>
<dbReference type="FunFam" id="2.40.50.140:FF:000003">
    <property type="entry name" value="50S ribosomal protein L2"/>
    <property type="match status" value="1"/>
</dbReference>
<dbReference type="FunFam" id="4.10.950.10:FF:000001">
    <property type="entry name" value="50S ribosomal protein L2"/>
    <property type="match status" value="1"/>
</dbReference>
<dbReference type="Gene3D" id="2.30.30.30">
    <property type="match status" value="1"/>
</dbReference>
<dbReference type="Gene3D" id="2.40.50.140">
    <property type="entry name" value="Nucleic acid-binding proteins"/>
    <property type="match status" value="1"/>
</dbReference>
<dbReference type="Gene3D" id="4.10.950.10">
    <property type="entry name" value="Ribosomal protein L2, domain 3"/>
    <property type="match status" value="1"/>
</dbReference>
<dbReference type="HAMAP" id="MF_01320_B">
    <property type="entry name" value="Ribosomal_uL2_B"/>
    <property type="match status" value="1"/>
</dbReference>
<dbReference type="InterPro" id="IPR012340">
    <property type="entry name" value="NA-bd_OB-fold"/>
</dbReference>
<dbReference type="InterPro" id="IPR014722">
    <property type="entry name" value="Rib_uL2_dom2"/>
</dbReference>
<dbReference type="InterPro" id="IPR002171">
    <property type="entry name" value="Ribosomal_uL2"/>
</dbReference>
<dbReference type="InterPro" id="IPR005880">
    <property type="entry name" value="Ribosomal_uL2_bac/org-type"/>
</dbReference>
<dbReference type="InterPro" id="IPR022669">
    <property type="entry name" value="Ribosomal_uL2_C"/>
</dbReference>
<dbReference type="InterPro" id="IPR022671">
    <property type="entry name" value="Ribosomal_uL2_CS"/>
</dbReference>
<dbReference type="InterPro" id="IPR014726">
    <property type="entry name" value="Ribosomal_uL2_dom3"/>
</dbReference>
<dbReference type="InterPro" id="IPR022666">
    <property type="entry name" value="Ribosomal_uL2_RNA-bd_dom"/>
</dbReference>
<dbReference type="InterPro" id="IPR008991">
    <property type="entry name" value="Translation_prot_SH3-like_sf"/>
</dbReference>
<dbReference type="NCBIfam" id="TIGR01171">
    <property type="entry name" value="rplB_bact"/>
    <property type="match status" value="1"/>
</dbReference>
<dbReference type="PANTHER" id="PTHR13691:SF5">
    <property type="entry name" value="LARGE RIBOSOMAL SUBUNIT PROTEIN UL2M"/>
    <property type="match status" value="1"/>
</dbReference>
<dbReference type="PANTHER" id="PTHR13691">
    <property type="entry name" value="RIBOSOMAL PROTEIN L2"/>
    <property type="match status" value="1"/>
</dbReference>
<dbReference type="Pfam" id="PF00181">
    <property type="entry name" value="Ribosomal_L2"/>
    <property type="match status" value="1"/>
</dbReference>
<dbReference type="Pfam" id="PF03947">
    <property type="entry name" value="Ribosomal_L2_C"/>
    <property type="match status" value="1"/>
</dbReference>
<dbReference type="PIRSF" id="PIRSF002158">
    <property type="entry name" value="Ribosomal_L2"/>
    <property type="match status" value="1"/>
</dbReference>
<dbReference type="SMART" id="SM01383">
    <property type="entry name" value="Ribosomal_L2"/>
    <property type="match status" value="1"/>
</dbReference>
<dbReference type="SMART" id="SM01382">
    <property type="entry name" value="Ribosomal_L2_C"/>
    <property type="match status" value="1"/>
</dbReference>
<dbReference type="SUPFAM" id="SSF50249">
    <property type="entry name" value="Nucleic acid-binding proteins"/>
    <property type="match status" value="1"/>
</dbReference>
<dbReference type="SUPFAM" id="SSF50104">
    <property type="entry name" value="Translation proteins SH3-like domain"/>
    <property type="match status" value="1"/>
</dbReference>
<dbReference type="PROSITE" id="PS00467">
    <property type="entry name" value="RIBOSOMAL_L2"/>
    <property type="match status" value="1"/>
</dbReference>
<evidence type="ECO:0000255" key="1">
    <source>
        <dbReference type="HAMAP-Rule" id="MF_01320"/>
    </source>
</evidence>
<evidence type="ECO:0000256" key="2">
    <source>
        <dbReference type="SAM" id="MobiDB-lite"/>
    </source>
</evidence>
<evidence type="ECO:0000305" key="3"/>
<sequence length="278" mass="30430">MGIRKYKPTTPGRRGSSVADFVEVTRSEPEKSLVRPLSKSGGRNSTGRITSRRRGGGHKRAYRVIDFRRHDKDGVPAKVAHIEYDPNRTARIALLHYADGEKRYIVAPNRLKQGDRIENGPAADIKPGNNLPLRNIPTGTVIHAVELRPGGGAKIARSAGSSVQLVAKDGPYAQLRMPSGEIRNVDARCRATIGEVGNAEQSNINWGKAGRMRWKGKRPSVRGVAMNPVDHPHGGGEGKTSGGRHPVSPWGQPEGRTRRPGKPSDKLIVRRRRTGKKR</sequence>
<gene>
    <name evidence="1" type="primary">rplB</name>
    <name type="ordered locus">Bcav_3140</name>
</gene>
<organism>
    <name type="scientific">Beutenbergia cavernae (strain ATCC BAA-8 / DSM 12333 / CCUG 43141 / JCM 11478 / NBRC 16432 / NCIMB 13614 / HKI 0122)</name>
    <dbReference type="NCBI Taxonomy" id="471853"/>
    <lineage>
        <taxon>Bacteria</taxon>
        <taxon>Bacillati</taxon>
        <taxon>Actinomycetota</taxon>
        <taxon>Actinomycetes</taxon>
        <taxon>Micrococcales</taxon>
        <taxon>Beutenbergiaceae</taxon>
        <taxon>Beutenbergia</taxon>
    </lineage>
</organism>
<protein>
    <recommendedName>
        <fullName evidence="1">Large ribosomal subunit protein uL2</fullName>
    </recommendedName>
    <alternativeName>
        <fullName evidence="3">50S ribosomal protein L2</fullName>
    </alternativeName>
</protein>
<reference key="1">
    <citation type="journal article" date="2009" name="Stand. Genomic Sci.">
        <title>Complete genome sequence of Beutenbergia cavernae type strain (HKI 0122).</title>
        <authorList>
            <person name="Land M."/>
            <person name="Pukall R."/>
            <person name="Abt B."/>
            <person name="Goker M."/>
            <person name="Rohde M."/>
            <person name="Glavina Del Rio T."/>
            <person name="Tice H."/>
            <person name="Copeland A."/>
            <person name="Cheng J.F."/>
            <person name="Lucas S."/>
            <person name="Chen F."/>
            <person name="Nolan M."/>
            <person name="Bruce D."/>
            <person name="Goodwin L."/>
            <person name="Pitluck S."/>
            <person name="Ivanova N."/>
            <person name="Mavromatis K."/>
            <person name="Ovchinnikova G."/>
            <person name="Pati A."/>
            <person name="Chen A."/>
            <person name="Palaniappan K."/>
            <person name="Hauser L."/>
            <person name="Chang Y.J."/>
            <person name="Jefferies C.C."/>
            <person name="Saunders E."/>
            <person name="Brettin T."/>
            <person name="Detter J.C."/>
            <person name="Han C."/>
            <person name="Chain P."/>
            <person name="Bristow J."/>
            <person name="Eisen J.A."/>
            <person name="Markowitz V."/>
            <person name="Hugenholtz P."/>
            <person name="Kyrpides N.C."/>
            <person name="Klenk H.P."/>
            <person name="Lapidus A."/>
        </authorList>
    </citation>
    <scope>NUCLEOTIDE SEQUENCE [LARGE SCALE GENOMIC DNA]</scope>
    <source>
        <strain>ATCC BAA-8 / DSM 12333 / CCUG 43141 / JCM 11478 / NBRC 16432 / NCIMB 13614 / HKI 0122</strain>
    </source>
</reference>
<proteinExistence type="inferred from homology"/>
<keyword id="KW-1185">Reference proteome</keyword>
<keyword id="KW-0687">Ribonucleoprotein</keyword>
<keyword id="KW-0689">Ribosomal protein</keyword>
<keyword id="KW-0694">RNA-binding</keyword>
<keyword id="KW-0699">rRNA-binding</keyword>